<accession>Q8X150</accession>
<feature type="signal peptide" evidence="10">
    <location>
        <begin position="1"/>
        <end position="16"/>
    </location>
</feature>
<feature type="chain" id="PRO_5004316175" description="Manganese lipoxygenase" evidence="3">
    <location>
        <begin position="17"/>
        <end position="618"/>
    </location>
</feature>
<feature type="domain" description="Lipoxygenase" evidence="5">
    <location>
        <begin position="47"/>
        <end position="617"/>
    </location>
</feature>
<feature type="region of interest" description="Disordered" evidence="6">
    <location>
        <begin position="36"/>
        <end position="58"/>
    </location>
</feature>
<feature type="compositionally biased region" description="Low complexity" evidence="6">
    <location>
        <begin position="36"/>
        <end position="45"/>
    </location>
</feature>
<feature type="compositionally biased region" description="Polar residues" evidence="6">
    <location>
        <begin position="46"/>
        <end position="58"/>
    </location>
</feature>
<feature type="binding site" evidence="1">
    <location>
        <position position="290"/>
    </location>
    <ligand>
        <name>Mn(2+)</name>
        <dbReference type="ChEBI" id="CHEBI:29035"/>
        <note>catalytic</note>
    </ligand>
</feature>
<feature type="binding site" evidence="1">
    <location>
        <position position="294"/>
    </location>
    <ligand>
        <name>Mn(2+)</name>
        <dbReference type="ChEBI" id="CHEBI:29035"/>
        <note>catalytic</note>
    </ligand>
</feature>
<feature type="binding site" evidence="1">
    <location>
        <position position="478"/>
    </location>
    <ligand>
        <name>Mn(2+)</name>
        <dbReference type="ChEBI" id="CHEBI:29035"/>
        <note>catalytic</note>
    </ligand>
</feature>
<feature type="binding site" evidence="1">
    <location>
        <position position="482"/>
    </location>
    <ligand>
        <name>Mn(2+)</name>
        <dbReference type="ChEBI" id="CHEBI:29035"/>
        <note>catalytic</note>
    </ligand>
</feature>
<feature type="binding site" evidence="1">
    <location>
        <position position="618"/>
    </location>
    <ligand>
        <name>Mn(2+)</name>
        <dbReference type="ChEBI" id="CHEBI:29035"/>
        <note>catalytic</note>
    </ligand>
</feature>
<feature type="glycosylation site" description="N-linked (GlcNAc...) asparagine" evidence="4">
    <location>
        <position position="60"/>
    </location>
</feature>
<feature type="glycosylation site" description="N-linked (GlcNAc...) asparagine" evidence="4">
    <location>
        <position position="91"/>
    </location>
</feature>
<feature type="glycosylation site" description="N-linked (GlcNAc...) asparagine" evidence="4">
    <location>
        <position position="106"/>
    </location>
</feature>
<feature type="glycosylation site" description="N-linked (GlcNAc...) asparagine" evidence="4">
    <location>
        <position position="116"/>
    </location>
</feature>
<feature type="glycosylation site" description="N-linked (GlcNAc...) asparagine" evidence="4">
    <location>
        <position position="157"/>
    </location>
</feature>
<feature type="glycosylation site" description="N-linked (GlcNAc...) asparagine" evidence="4">
    <location>
        <position position="513"/>
    </location>
</feature>
<feature type="sequence conflict" description="In Ref. 1; AA sequence." evidence="13" ref="1">
    <original>K</original>
    <variation>L</variation>
    <location>
        <position position="222"/>
    </location>
</feature>
<feature type="sequence conflict" description="In Ref. 1; AA sequence." evidence="13" ref="1">
    <original>V</original>
    <variation>L</variation>
    <location>
        <position position="493"/>
    </location>
</feature>
<feature type="sequence conflict" description="In Ref. 1; AA sequence." evidence="13" ref="1">
    <original>A</original>
    <variation>W</variation>
    <location>
        <position position="499"/>
    </location>
</feature>
<feature type="sequence conflict" description="In Ref. 1; AA sequence." evidence="13" ref="1">
    <original>R</original>
    <variation>D</variation>
    <location>
        <position position="552"/>
    </location>
</feature>
<feature type="sequence conflict" description="In Ref. 1; AA sequence." evidence="13" ref="1">
    <original>Y</original>
    <variation>R</variation>
    <location>
        <position position="568"/>
    </location>
</feature>
<feature type="sequence conflict" description="In Ref. 1; AA sequence." evidence="13" ref="1">
    <location>
        <position position="594"/>
    </location>
</feature>
<feature type="sequence conflict" description="In Ref. 1; AA sequence." evidence="13" ref="1">
    <location>
        <position position="603"/>
    </location>
</feature>
<keyword id="KW-0223">Dioxygenase</keyword>
<keyword id="KW-0903">Direct protein sequencing</keyword>
<keyword id="KW-0325">Glycoprotein</keyword>
<keyword id="KW-0464">Manganese</keyword>
<keyword id="KW-0479">Metal-binding</keyword>
<keyword id="KW-0560">Oxidoreductase</keyword>
<keyword id="KW-0964">Secreted</keyword>
<keyword id="KW-0732">Signal</keyword>
<sequence length="618" mass="67620">MRSRILAIVFAARHVAALPLAAEDAAATLSLTSSASSTTVLPSPTQYTLPNNDPNQGARNASIARKRELFLYGPSTLGQTTFYPTGELGNNISARDVLLWRQDAANQTATAYREANETFADITSRGGFKTLDDFALLYNGHWKESVPEGISKGMLSNYTSDLLFSMERLSSNPYVLKRLHPTKDKLPFSVESKVVKKLTATTLEALHKGGRLFLVDHSYQKKYTPQPGRYAAACQGLFYLDARSNQFLPLAIKTNVGADLTYTPLDDKNDWLLAKIMFNNNDLFYSQMYHVLFHTIPEIVHEAAFRTLSDRHPVMGVLNRLMYQAYAIRPVGGAVLFNPGGFWDQNFGLPASAAIDFPGSVYAQGGGGFQAGYLEKDLRSRGLVGEDSGPRLPHFPFYEDAHRLIGAIRRFMQAFVDSTYGADDGDDGALLRDYELQNWIAEANGPAQVRDFPAAPLRRRAQLVDVLTHVAWVTGGAHHVMNQGSPVKFSGVVPLHPAALYAPIPTTKGATGNGTRAGLLAWLPNERQAVEQVSLLARFNRAQVGDRKQTVRDAFAAPDLLAGNGPGYAAANARFVEDTGRISREMAGRGFDGKGLSQGMPFVWTALNPAVNPFFLSV</sequence>
<name>MNLOX_GAETR</name>
<protein>
    <recommendedName>
        <fullName evidence="12">Manganese lipoxygenase</fullName>
        <shortName evidence="12">Mn-LO</shortName>
        <shortName evidence="11">MnLOX</shortName>
        <ecNumber evidence="7 9">1.13.11.-</ecNumber>
        <ecNumber evidence="7 9">1.13.11.45</ecNumber>
    </recommendedName>
    <alternativeName>
        <fullName evidence="14">Linoleate 11S-lipoxygenase</fullName>
    </alternativeName>
    <alternativeName>
        <fullName evidence="14">Linoleate 13R-lipoxygenase</fullName>
    </alternativeName>
    <alternativeName>
        <fullName evidence="2">Manganese 13R-lipoxygenase</fullName>
        <shortName evidence="2">13R-MnLOX</shortName>
    </alternativeName>
</protein>
<reference key="1">
    <citation type="journal article" date="2002" name="Eur. J. Biochem.">
        <title>Cloning of the manganese lipoxygenase gene reveals homology with the lipoxygenase gene family.</title>
        <authorList>
            <person name="Hornsten L."/>
            <person name="Su C."/>
            <person name="Osbourn A.E."/>
            <person name="Hellman U."/>
            <person name="Oliw E.H."/>
        </authorList>
    </citation>
    <scope>NUCLEOTIDE SEQUENCE [MRNA] OF 1-595</scope>
    <scope>PROTEIN SEQUENCE OF 212-267; 312-320; 382-391; 489-500; 528-538; 551-569 AND 585-617</scope>
    <scope>SUBCELLULAR LOCATION</scope>
    <scope>GLYCOSYLATION</scope>
    <source>
        <strain>CBS 905.73</strain>
    </source>
</reference>
<reference key="2">
    <citation type="patent" date="2002-03-14" number="WO0220730">
        <title>Lipoxygenase.</title>
        <authorList>
            <person name="Sugio A."/>
            <person name="Takagi S."/>
            <person name="Christensen S.R."/>
            <person name="Oestergaard L."/>
            <person name="Oliw E.H."/>
        </authorList>
    </citation>
    <scope>PROTEIN SEQUENCE OF N-TERMINUS</scope>
    <source>
        <strain>CBS 905.73</strain>
    </source>
</reference>
<reference key="3">
    <citation type="journal article" date="1998" name="J. Biol. Chem.">
        <title>Manganese lipoxygenase. Purification and characterization.</title>
        <authorList>
            <person name="Su C."/>
            <person name="Oliw E.H."/>
        </authorList>
    </citation>
    <scope>FUNCTION</scope>
    <scope>CATALYTIC ACTIVITY</scope>
    <scope>BIOPHYSICOCHEMICAL PROPERTIES</scope>
    <scope>SUBCELLULAR LOCATION</scope>
    <scope>GLYCOSYLATION</scope>
</reference>
<reference key="4">
    <citation type="journal article" date="2000" name="J. Biol. Chem.">
        <title>Kinetics of manganese lipoxygenase with a catalytic mononuclear redox center.</title>
        <authorList>
            <person name="Su C."/>
            <person name="Sahlin M."/>
            <person name="Oliw E.H."/>
        </authorList>
    </citation>
    <scope>FUNCTION</scope>
    <scope>CATALYTIC ACTIVITY</scope>
    <scope>COFACTOR</scope>
    <scope>BIOPHYSICOCHEMICAL PROPERTIES</scope>
</reference>
<evidence type="ECO:0000250" key="1">
    <source>
        <dbReference type="UniProtKB" id="G4NAP4"/>
    </source>
</evidence>
<evidence type="ECO:0000250" key="2">
    <source>
        <dbReference type="UniProtKB" id="Q8X151"/>
    </source>
</evidence>
<evidence type="ECO:0000255" key="3"/>
<evidence type="ECO:0000255" key="4">
    <source>
        <dbReference type="PROSITE-ProRule" id="PRU00498"/>
    </source>
</evidence>
<evidence type="ECO:0000255" key="5">
    <source>
        <dbReference type="PROSITE-ProRule" id="PRU00726"/>
    </source>
</evidence>
<evidence type="ECO:0000256" key="6">
    <source>
        <dbReference type="SAM" id="MobiDB-lite"/>
    </source>
</evidence>
<evidence type="ECO:0000269" key="7">
    <source>
    </source>
</evidence>
<evidence type="ECO:0000269" key="8">
    <source>
    </source>
</evidence>
<evidence type="ECO:0000269" key="9">
    <source>
    </source>
</evidence>
<evidence type="ECO:0000269" key="10">
    <source ref="2"/>
</evidence>
<evidence type="ECO:0000303" key="11">
    <source>
    </source>
</evidence>
<evidence type="ECO:0000303" key="12">
    <source>
    </source>
</evidence>
<evidence type="ECO:0000305" key="13"/>
<evidence type="ECO:0000305" key="14">
    <source>
    </source>
</evidence>
<proteinExistence type="evidence at protein level"/>
<dbReference type="EC" id="1.13.11.-" evidence="7 9"/>
<dbReference type="EC" id="1.13.11.45" evidence="7 9"/>
<dbReference type="EMBL" id="AY040825">
    <property type="protein sequence ID" value="AAK81883.1"/>
    <property type="molecule type" value="mRNA"/>
</dbReference>
<dbReference type="SMR" id="Q8X150"/>
<dbReference type="VEuPathDB" id="FungiDB:GGTG_05591"/>
<dbReference type="SABIO-RK" id="Q8X150"/>
<dbReference type="GO" id="GO:0005576">
    <property type="term" value="C:extracellular region"/>
    <property type="evidence" value="ECO:0007669"/>
    <property type="project" value="UniProtKB-SubCell"/>
</dbReference>
<dbReference type="GO" id="GO:0050584">
    <property type="term" value="F:linoleate 11-lipoxygenase activity"/>
    <property type="evidence" value="ECO:0000314"/>
    <property type="project" value="UniProtKB"/>
</dbReference>
<dbReference type="GO" id="GO:0046872">
    <property type="term" value="F:metal ion binding"/>
    <property type="evidence" value="ECO:0007669"/>
    <property type="project" value="UniProtKB-KW"/>
</dbReference>
<dbReference type="GO" id="GO:0043651">
    <property type="term" value="P:linoleic acid metabolic process"/>
    <property type="evidence" value="ECO:0000305"/>
    <property type="project" value="UniProtKB"/>
</dbReference>
<dbReference type="GO" id="GO:0034440">
    <property type="term" value="P:lipid oxidation"/>
    <property type="evidence" value="ECO:0007669"/>
    <property type="project" value="InterPro"/>
</dbReference>
<dbReference type="Gene3D" id="3.10.450.60">
    <property type="match status" value="1"/>
</dbReference>
<dbReference type="Gene3D" id="1.20.245.10">
    <property type="entry name" value="Lipoxygenase-1, Domain 5"/>
    <property type="match status" value="1"/>
</dbReference>
<dbReference type="InterPro" id="IPR000907">
    <property type="entry name" value="LipOase"/>
</dbReference>
<dbReference type="InterPro" id="IPR013819">
    <property type="entry name" value="LipOase_C"/>
</dbReference>
<dbReference type="InterPro" id="IPR036226">
    <property type="entry name" value="LipOase_C_sf"/>
</dbReference>
<dbReference type="PANTHER" id="PTHR11771">
    <property type="entry name" value="LIPOXYGENASE"/>
    <property type="match status" value="1"/>
</dbReference>
<dbReference type="Pfam" id="PF00305">
    <property type="entry name" value="Lipoxygenase"/>
    <property type="match status" value="1"/>
</dbReference>
<dbReference type="SUPFAM" id="SSF48484">
    <property type="entry name" value="Lipoxigenase"/>
    <property type="match status" value="1"/>
</dbReference>
<dbReference type="PROSITE" id="PS51393">
    <property type="entry name" value="LIPOXYGENASE_3"/>
    <property type="match status" value="1"/>
</dbReference>
<comment type="function">
    <text evidence="7 9">Lipoxygenase that metabolizes linoleic and alpha-linolenic acids to 11S- and 13R-hydroperoxy fatty acids. At the end of lipoxygenation, the intermediate product 11S-HPODE from linoleic acid is then transformed into 13R-HPODE as the final product. It also acts on alpha-linolenic acid producing 11S-HPOTrE and 13R-HPOTrE with subsequent transformation of 11S-HPOTrE to 13R-HPOTrE as the final product. Gamma-linolenic acid is a poor substrate. Oleate and arachidonate are not substrates.</text>
</comment>
<comment type="catalytic activity">
    <reaction evidence="7 9">
        <text>(9Z,12Z)-octadecadienoate + O2 = (11S)-hydroperoxy-(9Z,12Z)-octadecadienoate</text>
        <dbReference type="Rhea" id="RHEA:18993"/>
        <dbReference type="ChEBI" id="CHEBI:15379"/>
        <dbReference type="ChEBI" id="CHEBI:30245"/>
        <dbReference type="ChEBI" id="CHEBI:57467"/>
        <dbReference type="EC" id="1.13.11.45"/>
    </reaction>
</comment>
<comment type="catalytic activity">
    <reaction evidence="7 9">
        <text>(9Z,12Z)-octadecadienoate + O2 = (13R)-hydroperoxy-(9Z,11E)-octadecadienoate</text>
        <dbReference type="Rhea" id="RHEA:51240"/>
        <dbReference type="ChEBI" id="CHEBI:15379"/>
        <dbReference type="ChEBI" id="CHEBI:30245"/>
        <dbReference type="ChEBI" id="CHEBI:133985"/>
    </reaction>
</comment>
<comment type="catalytic activity">
    <reaction evidence="2">
        <text>(9Z,12Z,15Z)-octadecatrienoate + O2 = (11S)-hydroperoxy-(9Z,12Z,15Z)-octadecatrienoate</text>
        <dbReference type="Rhea" id="RHEA:51440"/>
        <dbReference type="ChEBI" id="CHEBI:15379"/>
        <dbReference type="ChEBI" id="CHEBI:32387"/>
        <dbReference type="ChEBI" id="CHEBI:134110"/>
    </reaction>
</comment>
<comment type="catalytic activity">
    <reaction evidence="7 9">
        <text>(9Z,12Z,15Z)-octadecatrienoate + O2 = (13R)-hydroperoxy-(9Z,11E,15Z)-octadecatrienoate</text>
        <dbReference type="Rhea" id="RHEA:51244"/>
        <dbReference type="ChEBI" id="CHEBI:15379"/>
        <dbReference type="ChEBI" id="CHEBI:32387"/>
        <dbReference type="ChEBI" id="CHEBI:133987"/>
    </reaction>
</comment>
<comment type="cofactor">
    <cofactor evidence="7">
        <name>Mn(2+)</name>
        <dbReference type="ChEBI" id="CHEBI:29035"/>
    </cofactor>
</comment>
<comment type="biophysicochemical properties">
    <kinetics>
        <KM evidence="9">4.4 uM for linoleate</KM>
        <KM evidence="9">2.4 uM for alpha-linoleate</KM>
        <KM evidence="9">31 uM for oxygen</KM>
        <KM evidence="7">8.1 uM for 11S-HPODE (for isomerization to 13R-HPODE reaction)</KM>
        <Vmax evidence="9">8.2 umol/min/mg enzyme for linoleate</Vmax>
        <Vmax evidence="9">17.6 umol/min/mg enzyme for alpha-linoleate</Vmax>
        <Vmax evidence="9">10.4 umol/min/mg enzyme towards oxygen</Vmax>
        <Vmax evidence="7">7.5 umol/min/mg enzyme for 11S-HPODE (for isomerization to 13R-HPODE reaction)</Vmax>
    </kinetics>
    <phDependence>
        <text evidence="9">Optimum pH is 7. Active from pH 5 to pH 11.</text>
    </phDependence>
    <temperatureDependence>
        <text evidence="9">Optimum temperature is 60 degrees Celsius. Enzyme activity decreases sharply above 63 degrees Celsius.</text>
    </temperatureDependence>
</comment>
<comment type="subcellular location">
    <subcellularLocation>
        <location evidence="8 9">Secreted</location>
    </subcellularLocation>
</comment>
<comment type="PTM">
    <text evidence="8 9">N- and O-glycosylated.</text>
</comment>
<comment type="similarity">
    <text evidence="13">Belongs to the lipoxygenase family.</text>
</comment>
<organism>
    <name type="scientific">Gaeumannomyces tritici</name>
    <name type="common">Wheat and barley take-all root rot fungus</name>
    <name type="synonym">Gaeumannomyces graminis var. tritici</name>
    <dbReference type="NCBI Taxonomy" id="36779"/>
    <lineage>
        <taxon>Eukaryota</taxon>
        <taxon>Fungi</taxon>
        <taxon>Dikarya</taxon>
        <taxon>Ascomycota</taxon>
        <taxon>Pezizomycotina</taxon>
        <taxon>Sordariomycetes</taxon>
        <taxon>Sordariomycetidae</taxon>
        <taxon>Magnaporthales</taxon>
        <taxon>Magnaporthaceae</taxon>
        <taxon>Gaeumannomyces</taxon>
    </lineage>
</organism>